<reference key="1">
    <citation type="submission" date="1996-04" db="EMBL/GenBank/DDBJ databases">
        <authorList>
            <person name="Dopico B."/>
            <person name="Labrador E."/>
            <person name="Ullan R.V."/>
            <person name="Munoz F.J."/>
        </authorList>
    </citation>
    <scope>NUCLEOTIDE SEQUENCE [MRNA]</scope>
    <source>
        <tissue>Etiolated epicotyl</tissue>
    </source>
</reference>
<organism>
    <name type="scientific">Cicer arietinum</name>
    <name type="common">Chickpea</name>
    <name type="synonym">Garbanzo</name>
    <dbReference type="NCBI Taxonomy" id="3827"/>
    <lineage>
        <taxon>Eukaryota</taxon>
        <taxon>Viridiplantae</taxon>
        <taxon>Streptophyta</taxon>
        <taxon>Embryophyta</taxon>
        <taxon>Tracheophyta</taxon>
        <taxon>Spermatophyta</taxon>
        <taxon>Magnoliopsida</taxon>
        <taxon>eudicotyledons</taxon>
        <taxon>Gunneridae</taxon>
        <taxon>Pentapetalae</taxon>
        <taxon>rosids</taxon>
        <taxon>fabids</taxon>
        <taxon>Fabales</taxon>
        <taxon>Fabaceae</taxon>
        <taxon>Papilionoideae</taxon>
        <taxon>50 kb inversion clade</taxon>
        <taxon>NPAAA clade</taxon>
        <taxon>Hologalegina</taxon>
        <taxon>IRL clade</taxon>
        <taxon>Cicereae</taxon>
        <taxon>Cicer</taxon>
    </lineage>
</organism>
<protein>
    <recommendedName>
        <fullName>Metallothionein-like protein 1</fullName>
        <shortName>MT-1</shortName>
    </recommendedName>
</protein>
<keyword id="KW-0479">Metal-binding</keyword>
<keyword id="KW-0480">Metal-thiolate cluster</keyword>
<keyword id="KW-1185">Reference proteome</keyword>
<sequence>MSGCNCGSSCNCGDQCKCNKRSGLSYVEAGETTETVVLGVGPTKIHFEGAEMSVAAEDGGCKCGSSCTCDPCNCK</sequence>
<comment type="function">
    <text>Metallothioneins have a high content of cysteine residues that bind various heavy metals.</text>
</comment>
<comment type="similarity">
    <text evidence="1">Belongs to the metallothionein superfamily. Type 15 family.</text>
</comment>
<evidence type="ECO:0000305" key="1"/>
<dbReference type="EMBL" id="X95708">
    <property type="protein sequence ID" value="CAA65008.1"/>
    <property type="molecule type" value="mRNA"/>
</dbReference>
<dbReference type="STRING" id="3827.Q39458"/>
<dbReference type="PaxDb" id="3827-XP_004506574.1"/>
<dbReference type="eggNOG" id="KOG4738">
    <property type="taxonomic scope" value="Eukaryota"/>
</dbReference>
<dbReference type="Proteomes" id="UP000087171">
    <property type="component" value="Unplaced"/>
</dbReference>
<dbReference type="GO" id="GO:0046872">
    <property type="term" value="F:metal ion binding"/>
    <property type="evidence" value="ECO:0007669"/>
    <property type="project" value="UniProtKB-KW"/>
</dbReference>
<dbReference type="InterPro" id="IPR000347">
    <property type="entry name" value="Metalthion_15p"/>
</dbReference>
<dbReference type="PANTHER" id="PTHR33543:SF10">
    <property type="entry name" value="METALLOTHIONEIN-LIKE PROTEIN"/>
    <property type="match status" value="1"/>
</dbReference>
<dbReference type="PANTHER" id="PTHR33543">
    <property type="entry name" value="METALLOTHIONEIN-LIKE PROTEIN 2A"/>
    <property type="match status" value="1"/>
</dbReference>
<dbReference type="Pfam" id="PF01439">
    <property type="entry name" value="Metallothio_2"/>
    <property type="match status" value="1"/>
</dbReference>
<proteinExistence type="inferred from homology"/>
<feature type="chain" id="PRO_0000197375" description="Metallothionein-like protein 1">
    <location>
        <begin position="1"/>
        <end position="75"/>
    </location>
</feature>
<name>MT1_CICAR</name>
<accession>Q39458</accession>